<comment type="similarity">
    <text evidence="1">Belongs to the UPF0377 family.</text>
</comment>
<reference key="1">
    <citation type="journal article" date="1995" name="Proc. Natl. Acad. Sci. U.S.A.">
        <title>The nucleotide sequence of chromosome I from Saccharomyces cerevisiae.</title>
        <authorList>
            <person name="Bussey H."/>
            <person name="Kaback D.B."/>
            <person name="Zhong W.-W."/>
            <person name="Vo D.H."/>
            <person name="Clark M.W."/>
            <person name="Fortin N."/>
            <person name="Hall J."/>
            <person name="Ouellette B.F.F."/>
            <person name="Keng T."/>
            <person name="Barton A.B."/>
            <person name="Su Y."/>
            <person name="Davies C.J."/>
            <person name="Storms R.K."/>
        </authorList>
    </citation>
    <scope>NUCLEOTIDE SEQUENCE [LARGE SCALE GENOMIC DNA]</scope>
    <source>
        <strain>ATCC 204508 / S288c</strain>
    </source>
</reference>
<reference key="2">
    <citation type="journal article" date="2014" name="G3 (Bethesda)">
        <title>The reference genome sequence of Saccharomyces cerevisiae: Then and now.</title>
        <authorList>
            <person name="Engel S.R."/>
            <person name="Dietrich F.S."/>
            <person name="Fisk D.G."/>
            <person name="Binkley G."/>
            <person name="Balakrishnan R."/>
            <person name="Costanzo M.C."/>
            <person name="Dwight S.S."/>
            <person name="Hitz B.C."/>
            <person name="Karra K."/>
            <person name="Nash R.S."/>
            <person name="Weng S."/>
            <person name="Wong E.D."/>
            <person name="Lloyd P."/>
            <person name="Skrzypek M.S."/>
            <person name="Miyasato S.R."/>
            <person name="Simison M."/>
            <person name="Cherry J.M."/>
        </authorList>
    </citation>
    <scope>GENOME REANNOTATION</scope>
    <source>
        <strain>ATCC 204508 / S288c</strain>
    </source>
</reference>
<reference key="3">
    <citation type="journal article" date="2002" name="Nat. Biotechnol.">
        <title>An integrated approach for finding overlooked genes in yeast.</title>
        <authorList>
            <person name="Kumar A."/>
            <person name="Harrison P.M."/>
            <person name="Cheung K.-H."/>
            <person name="Lan N."/>
            <person name="Echols N."/>
            <person name="Bertone P."/>
            <person name="Miller P."/>
            <person name="Gerstein M.B."/>
            <person name="Snyder M."/>
        </authorList>
    </citation>
    <scope>NUCLEOTIDE SEQUENCE [GENOMIC DNA]</scope>
</reference>
<feature type="chain" id="PRO_0000248403" description="Putative UPF0377 protein YAL067W-A">
    <location>
        <begin position="1"/>
        <end position="75"/>
    </location>
</feature>
<organism>
    <name type="scientific">Saccharomyces cerevisiae (strain ATCC 204508 / S288c)</name>
    <name type="common">Baker's yeast</name>
    <dbReference type="NCBI Taxonomy" id="559292"/>
    <lineage>
        <taxon>Eukaryota</taxon>
        <taxon>Fungi</taxon>
        <taxon>Dikarya</taxon>
        <taxon>Ascomycota</taxon>
        <taxon>Saccharomycotina</taxon>
        <taxon>Saccharomycetes</taxon>
        <taxon>Saccharomycetales</taxon>
        <taxon>Saccharomycetaceae</taxon>
        <taxon>Saccharomyces</taxon>
    </lineage>
</organism>
<protein>
    <recommendedName>
        <fullName>Putative UPF0377 protein YAL067W-A</fullName>
    </recommendedName>
</protein>
<gene>
    <name type="ordered locus">YAL067W-A</name>
</gene>
<evidence type="ECO:0000305" key="1"/>
<sequence>MPIIGVPRCLIKPFSVPVTFPFSVKKNIRILDLDPRTEAYCLSLNSVCFKRLPRRKYFHLLNSYNIKRVLGVVYC</sequence>
<name>YA067_YEAST</name>
<dbReference type="EMBL" id="U12980">
    <property type="status" value="NOT_ANNOTATED_CDS"/>
    <property type="molecule type" value="Genomic_DNA"/>
</dbReference>
<dbReference type="EMBL" id="U73805">
    <property type="status" value="NOT_ANNOTATED_CDS"/>
    <property type="molecule type" value="Genomic_DNA"/>
</dbReference>
<dbReference type="EMBL" id="AF479987">
    <property type="protein sequence ID" value="AAL79300.1"/>
    <property type="molecule type" value="Genomic_DNA"/>
</dbReference>
<dbReference type="EMBL" id="BK006935">
    <property type="protein sequence ID" value="DAA06919.1"/>
    <property type="molecule type" value="Genomic_DNA"/>
</dbReference>
<dbReference type="RefSeq" id="NP_878038.1">
    <property type="nucleotide sequence ID" value="NM_001184582.1"/>
</dbReference>
<dbReference type="BioGRID" id="36968">
    <property type="interactions" value="3"/>
</dbReference>
<dbReference type="FunCoup" id="Q8TGK6">
    <property type="interactions" value="6"/>
</dbReference>
<dbReference type="PaxDb" id="4932-YAL067W-A"/>
<dbReference type="EnsemblFungi" id="YAL067W-A_mRNA">
    <property type="protein sequence ID" value="YAL067W-A"/>
    <property type="gene ID" value="YAL067W-A"/>
</dbReference>
<dbReference type="GeneID" id="1466426"/>
<dbReference type="KEGG" id="sce:YAL067W-A"/>
<dbReference type="AGR" id="SGD:S000028593"/>
<dbReference type="SGD" id="S000028593">
    <property type="gene designation" value="YAL067W-A"/>
</dbReference>
<dbReference type="VEuPathDB" id="FungiDB:YAL067W-A"/>
<dbReference type="GeneTree" id="ENSGT00940000177730"/>
<dbReference type="HOGENOM" id="CLU_183954_0_0_1"/>
<dbReference type="InParanoid" id="Q8TGK6"/>
<dbReference type="BioCyc" id="YEAST:G3O-28902-MONOMER"/>
<dbReference type="PRO" id="PR:Q8TGK6"/>
<dbReference type="Proteomes" id="UP000002311">
    <property type="component" value="Chromosome I"/>
</dbReference>
<dbReference type="RNAct" id="Q8TGK6">
    <property type="molecule type" value="protein"/>
</dbReference>
<keyword id="KW-1185">Reference proteome</keyword>
<proteinExistence type="evidence at transcript level"/>
<accession>Q8TGK6</accession>
<accession>D6VPE9</accession>